<accession>B8CWI8</accession>
<keyword id="KW-0963">Cytoplasm</keyword>
<keyword id="KW-0489">Methyltransferase</keyword>
<keyword id="KW-1185">Reference proteome</keyword>
<keyword id="KW-0698">rRNA processing</keyword>
<keyword id="KW-0949">S-adenosyl-L-methionine</keyword>
<keyword id="KW-0808">Transferase</keyword>
<name>RSMH_HALOH</name>
<proteinExistence type="inferred from homology"/>
<sequence length="311" mass="35795">MLEHKPVLLKESLDYLKCKENGIYIDATLGRGGHTEEIIKAINDRGLVIGIDRDHEAIESVKKRLKKYSSLRTVHDNFTNIPFILEQFNIKAVDGMLFDLGVSSPQFDNPERGFSYRKEGPLDMRMDKNQELTAEYIVNNFSHEELTNIFKEYGEERWASRIANFIIKSRQHKPIKTTLQLTTIIKDAIPASARRKGGHPARRTFQALRIATNDELNILKKTINHVVKFLKPGGRICIISFHSLEDRIVKKTFRELARDCVCPPDFPECVCDHKRKLKIITKKPVKPGENEVENNPRARSARLRVAERVLN</sequence>
<feature type="chain" id="PRO_0000386924" description="Ribosomal RNA small subunit methyltransferase H">
    <location>
        <begin position="1"/>
        <end position="311"/>
    </location>
</feature>
<feature type="binding site" evidence="1">
    <location>
        <begin position="32"/>
        <end position="34"/>
    </location>
    <ligand>
        <name>S-adenosyl-L-methionine</name>
        <dbReference type="ChEBI" id="CHEBI:59789"/>
    </ligand>
</feature>
<feature type="binding site" evidence="1">
    <location>
        <position position="52"/>
    </location>
    <ligand>
        <name>S-adenosyl-L-methionine</name>
        <dbReference type="ChEBI" id="CHEBI:59789"/>
    </ligand>
</feature>
<feature type="binding site" evidence="1">
    <location>
        <position position="78"/>
    </location>
    <ligand>
        <name>S-adenosyl-L-methionine</name>
        <dbReference type="ChEBI" id="CHEBI:59789"/>
    </ligand>
</feature>
<feature type="binding site" evidence="1">
    <location>
        <position position="99"/>
    </location>
    <ligand>
        <name>S-adenosyl-L-methionine</name>
        <dbReference type="ChEBI" id="CHEBI:59789"/>
    </ligand>
</feature>
<feature type="binding site" evidence="1">
    <location>
        <position position="106"/>
    </location>
    <ligand>
        <name>S-adenosyl-L-methionine</name>
        <dbReference type="ChEBI" id="CHEBI:59789"/>
    </ligand>
</feature>
<reference key="1">
    <citation type="journal article" date="2009" name="PLoS ONE">
        <title>Genome analysis of the anaerobic thermohalophilic bacterium Halothermothrix orenii.</title>
        <authorList>
            <person name="Mavromatis K."/>
            <person name="Ivanova N."/>
            <person name="Anderson I."/>
            <person name="Lykidis A."/>
            <person name="Hooper S.D."/>
            <person name="Sun H."/>
            <person name="Kunin V."/>
            <person name="Lapidus A."/>
            <person name="Hugenholtz P."/>
            <person name="Patel B."/>
            <person name="Kyrpides N.C."/>
        </authorList>
    </citation>
    <scope>NUCLEOTIDE SEQUENCE [LARGE SCALE GENOMIC DNA]</scope>
    <source>
        <strain>H 168 / OCM 544 / DSM 9562</strain>
    </source>
</reference>
<dbReference type="EC" id="2.1.1.199" evidence="1"/>
<dbReference type="EMBL" id="CP001098">
    <property type="protein sequence ID" value="ACL69657.1"/>
    <property type="molecule type" value="Genomic_DNA"/>
</dbReference>
<dbReference type="RefSeq" id="WP_012635844.1">
    <property type="nucleotide sequence ID" value="NC_011899.1"/>
</dbReference>
<dbReference type="SMR" id="B8CWI8"/>
<dbReference type="STRING" id="373903.Hore_09010"/>
<dbReference type="KEGG" id="hor:Hore_09010"/>
<dbReference type="eggNOG" id="COG0275">
    <property type="taxonomic scope" value="Bacteria"/>
</dbReference>
<dbReference type="HOGENOM" id="CLU_038422_2_0_9"/>
<dbReference type="Proteomes" id="UP000000719">
    <property type="component" value="Chromosome"/>
</dbReference>
<dbReference type="GO" id="GO:0005737">
    <property type="term" value="C:cytoplasm"/>
    <property type="evidence" value="ECO:0007669"/>
    <property type="project" value="UniProtKB-SubCell"/>
</dbReference>
<dbReference type="GO" id="GO:0071424">
    <property type="term" value="F:rRNA (cytosine-N4-)-methyltransferase activity"/>
    <property type="evidence" value="ECO:0007669"/>
    <property type="project" value="UniProtKB-UniRule"/>
</dbReference>
<dbReference type="GO" id="GO:0070475">
    <property type="term" value="P:rRNA base methylation"/>
    <property type="evidence" value="ECO:0007669"/>
    <property type="project" value="UniProtKB-UniRule"/>
</dbReference>
<dbReference type="FunFam" id="1.10.150.170:FF:000001">
    <property type="entry name" value="Ribosomal RNA small subunit methyltransferase H"/>
    <property type="match status" value="1"/>
</dbReference>
<dbReference type="Gene3D" id="1.10.150.170">
    <property type="entry name" value="Putative methyltransferase TM0872, insert domain"/>
    <property type="match status" value="1"/>
</dbReference>
<dbReference type="Gene3D" id="3.40.50.150">
    <property type="entry name" value="Vaccinia Virus protein VP39"/>
    <property type="match status" value="1"/>
</dbReference>
<dbReference type="HAMAP" id="MF_01007">
    <property type="entry name" value="16SrRNA_methyltr_H"/>
    <property type="match status" value="1"/>
</dbReference>
<dbReference type="InterPro" id="IPR002903">
    <property type="entry name" value="RsmH"/>
</dbReference>
<dbReference type="InterPro" id="IPR023397">
    <property type="entry name" value="SAM-dep_MeTrfase_MraW_recog"/>
</dbReference>
<dbReference type="InterPro" id="IPR029063">
    <property type="entry name" value="SAM-dependent_MTases_sf"/>
</dbReference>
<dbReference type="NCBIfam" id="TIGR00006">
    <property type="entry name" value="16S rRNA (cytosine(1402)-N(4))-methyltransferase RsmH"/>
    <property type="match status" value="1"/>
</dbReference>
<dbReference type="PANTHER" id="PTHR11265:SF0">
    <property type="entry name" value="12S RRNA N4-METHYLCYTIDINE METHYLTRANSFERASE"/>
    <property type="match status" value="1"/>
</dbReference>
<dbReference type="PANTHER" id="PTHR11265">
    <property type="entry name" value="S-ADENOSYL-METHYLTRANSFERASE MRAW"/>
    <property type="match status" value="1"/>
</dbReference>
<dbReference type="Pfam" id="PF01795">
    <property type="entry name" value="Methyltransf_5"/>
    <property type="match status" value="1"/>
</dbReference>
<dbReference type="PIRSF" id="PIRSF004486">
    <property type="entry name" value="MraW"/>
    <property type="match status" value="1"/>
</dbReference>
<dbReference type="SUPFAM" id="SSF81799">
    <property type="entry name" value="Putative methyltransferase TM0872, insert domain"/>
    <property type="match status" value="1"/>
</dbReference>
<dbReference type="SUPFAM" id="SSF53335">
    <property type="entry name" value="S-adenosyl-L-methionine-dependent methyltransferases"/>
    <property type="match status" value="1"/>
</dbReference>
<organism>
    <name type="scientific">Halothermothrix orenii (strain H 168 / OCM 544 / DSM 9562)</name>
    <dbReference type="NCBI Taxonomy" id="373903"/>
    <lineage>
        <taxon>Bacteria</taxon>
        <taxon>Bacillati</taxon>
        <taxon>Bacillota</taxon>
        <taxon>Clostridia</taxon>
        <taxon>Halanaerobiales</taxon>
        <taxon>Halothermotrichaceae</taxon>
        <taxon>Halothermothrix</taxon>
    </lineage>
</organism>
<evidence type="ECO:0000255" key="1">
    <source>
        <dbReference type="HAMAP-Rule" id="MF_01007"/>
    </source>
</evidence>
<comment type="function">
    <text evidence="1">Specifically methylates the N4 position of cytidine in position 1402 (C1402) of 16S rRNA.</text>
</comment>
<comment type="catalytic activity">
    <reaction evidence="1">
        <text>cytidine(1402) in 16S rRNA + S-adenosyl-L-methionine = N(4)-methylcytidine(1402) in 16S rRNA + S-adenosyl-L-homocysteine + H(+)</text>
        <dbReference type="Rhea" id="RHEA:42928"/>
        <dbReference type="Rhea" id="RHEA-COMP:10286"/>
        <dbReference type="Rhea" id="RHEA-COMP:10287"/>
        <dbReference type="ChEBI" id="CHEBI:15378"/>
        <dbReference type="ChEBI" id="CHEBI:57856"/>
        <dbReference type="ChEBI" id="CHEBI:59789"/>
        <dbReference type="ChEBI" id="CHEBI:74506"/>
        <dbReference type="ChEBI" id="CHEBI:82748"/>
        <dbReference type="EC" id="2.1.1.199"/>
    </reaction>
</comment>
<comment type="subcellular location">
    <subcellularLocation>
        <location evidence="1">Cytoplasm</location>
    </subcellularLocation>
</comment>
<comment type="similarity">
    <text evidence="1">Belongs to the methyltransferase superfamily. RsmH family.</text>
</comment>
<protein>
    <recommendedName>
        <fullName evidence="1">Ribosomal RNA small subunit methyltransferase H</fullName>
        <ecNumber evidence="1">2.1.1.199</ecNumber>
    </recommendedName>
    <alternativeName>
        <fullName evidence="1">16S rRNA m(4)C1402 methyltransferase</fullName>
    </alternativeName>
    <alternativeName>
        <fullName evidence="1">rRNA (cytosine-N(4)-)-methyltransferase RsmH</fullName>
    </alternativeName>
</protein>
<gene>
    <name evidence="1" type="primary">rsmH</name>
    <name type="synonym">mraW</name>
    <name type="ordered locus">Hore_09010</name>
</gene>